<protein>
    <recommendedName>
        <fullName>B1 kinase</fullName>
    </recommendedName>
    <alternativeName>
        <fullName>Serine/threonine-protein kinase 1</fullName>
        <ecNumber>2.7.11.1</ecNumber>
    </alternativeName>
    <alternativeName>
        <fullName>Vaccinia protein kinase 1</fullName>
    </alternativeName>
</protein>
<organismHost>
    <name type="scientific">Homo sapiens</name>
    <name type="common">Human</name>
    <dbReference type="NCBI Taxonomy" id="9606"/>
</organismHost>
<comment type="function">
    <text evidence="1">Essential serine/threonine-protein kinase that plays different role in the viral life cycle. Phosphorylates the host small ribosomal protein RACK1 thereby customizing the ribosomes to a state optimal for viral mRNAs (which contain poly-A leaders) but not for host mRNAs. Facilitates viral DNA replication by inhibiting host BANF1, a cellular host defense responsive to foreign DNA. Phosphorylates host BANF1 on serine and threonine residues; this leads to BANF1 relocalization to the cytoplasm, loss of dimerization and impaired DNA binding activity. Indeed, BANF1 activity depends on its DNA-binding property which is blocked by VPK1-mediated phosphorylation. Required for viral intermediate genes expression, probably by inhibiting host BANF1. Modulates cellular responses via host JUN by two different mechanisms, either by direct phosphorylation or by modulation of upstream JIP1-MAPK complexes. Seems to participate in the accumulation/processing of late proteins and thus in virion maturation. In addition, inhibits B12 repressive activity on viral DNA replication via a phosphorylation-dependent mechanism.</text>
</comment>
<comment type="catalytic activity">
    <reaction evidence="1">
        <text>L-seryl-[protein] + ATP = O-phospho-L-seryl-[protein] + ADP + H(+)</text>
        <dbReference type="Rhea" id="RHEA:17989"/>
        <dbReference type="Rhea" id="RHEA-COMP:9863"/>
        <dbReference type="Rhea" id="RHEA-COMP:11604"/>
        <dbReference type="ChEBI" id="CHEBI:15378"/>
        <dbReference type="ChEBI" id="CHEBI:29999"/>
        <dbReference type="ChEBI" id="CHEBI:30616"/>
        <dbReference type="ChEBI" id="CHEBI:83421"/>
        <dbReference type="ChEBI" id="CHEBI:456216"/>
        <dbReference type="EC" id="2.7.11.1"/>
    </reaction>
</comment>
<comment type="catalytic activity">
    <reaction evidence="1">
        <text>L-threonyl-[protein] + ATP = O-phospho-L-threonyl-[protein] + ADP + H(+)</text>
        <dbReference type="Rhea" id="RHEA:46608"/>
        <dbReference type="Rhea" id="RHEA-COMP:11060"/>
        <dbReference type="Rhea" id="RHEA-COMP:11605"/>
        <dbReference type="ChEBI" id="CHEBI:15378"/>
        <dbReference type="ChEBI" id="CHEBI:30013"/>
        <dbReference type="ChEBI" id="CHEBI:30616"/>
        <dbReference type="ChEBI" id="CHEBI:61977"/>
        <dbReference type="ChEBI" id="CHEBI:456216"/>
        <dbReference type="EC" id="2.7.11.1"/>
    </reaction>
</comment>
<comment type="cofactor">
    <cofactor evidence="1">
        <name>Mg(2+)</name>
        <dbReference type="ChEBI" id="CHEBI:18420"/>
    </cofactor>
</comment>
<comment type="subunit">
    <text evidence="1">Interacts with host JIP1; this interaction increases the amount of MAPK bound to JIP1 and subsequently increases the activity of transcription factors, such as JUN, that respond to these complexes. Interacts with protein OPG198; this interaction inhibits the repressive activity of OPG198 pseudokinase on viral replication factory formation.</text>
</comment>
<comment type="subcellular location">
    <subcellularLocation>
        <location evidence="1">Virion</location>
    </subcellularLocation>
    <subcellularLocation>
        <location evidence="1">Host cytoplasm</location>
    </subcellularLocation>
    <text evidence="1">Localizes in cytoplasmic viral factories and is a minor component of the virion.</text>
</comment>
<comment type="induction">
    <text>Expressed early in the viral replication cycle.</text>
</comment>
<comment type="PTM">
    <text evidence="1">Autophosphorylated.</text>
</comment>
<comment type="similarity">
    <text evidence="2">Belongs to the protein kinase superfamily. Ser/Thr protein kinase family. Poxviruses subfamily.</text>
</comment>
<gene>
    <name type="primary">OPG187</name>
    <name type="synonym">VPK1</name>
    <name type="ORF">B1R</name>
</gene>
<accession>P20505</accession>
<keyword id="KW-0067">ATP-binding</keyword>
<keyword id="KW-0244">Early protein</keyword>
<keyword id="KW-1035">Host cytoplasm</keyword>
<keyword id="KW-0945">Host-virus interaction</keyword>
<keyword id="KW-0418">Kinase</keyword>
<keyword id="KW-0460">Magnesium</keyword>
<keyword id="KW-0547">Nucleotide-binding</keyword>
<keyword id="KW-0597">Phosphoprotein</keyword>
<keyword id="KW-1185">Reference proteome</keyword>
<keyword id="KW-0723">Serine/threonine-protein kinase</keyword>
<keyword id="KW-0808">Transferase</keyword>
<keyword id="KW-1188">Viral release from host cell</keyword>
<keyword id="KW-0946">Virion</keyword>
<dbReference type="EC" id="2.7.11.1"/>
<dbReference type="EMBL" id="M35027">
    <property type="protein sequence ID" value="AAA48194.1"/>
    <property type="molecule type" value="Genomic_DNA"/>
</dbReference>
<dbReference type="PIR" id="I42525">
    <property type="entry name" value="TVVZ9Z"/>
</dbReference>
<dbReference type="SMR" id="P20505"/>
<dbReference type="IntAct" id="P20505">
    <property type="interactions" value="3"/>
</dbReference>
<dbReference type="MINT" id="P20505"/>
<dbReference type="BRENDA" id="2.7.11.1">
    <property type="organism ID" value="6591"/>
</dbReference>
<dbReference type="Proteomes" id="UP000008269">
    <property type="component" value="Segment"/>
</dbReference>
<dbReference type="GO" id="GO:0030430">
    <property type="term" value="C:host cell cytoplasm"/>
    <property type="evidence" value="ECO:0007669"/>
    <property type="project" value="UniProtKB-SubCell"/>
</dbReference>
<dbReference type="GO" id="GO:0044423">
    <property type="term" value="C:virion component"/>
    <property type="evidence" value="ECO:0007669"/>
    <property type="project" value="UniProtKB-KW"/>
</dbReference>
<dbReference type="GO" id="GO:0005524">
    <property type="term" value="F:ATP binding"/>
    <property type="evidence" value="ECO:0007669"/>
    <property type="project" value="UniProtKB-KW"/>
</dbReference>
<dbReference type="GO" id="GO:0106310">
    <property type="term" value="F:protein serine kinase activity"/>
    <property type="evidence" value="ECO:0007669"/>
    <property type="project" value="RHEA"/>
</dbReference>
<dbReference type="GO" id="GO:0004674">
    <property type="term" value="F:protein serine/threonine kinase activity"/>
    <property type="evidence" value="ECO:0007669"/>
    <property type="project" value="UniProtKB-KW"/>
</dbReference>
<dbReference type="FunFam" id="1.10.510.10:FF:000892">
    <property type="entry name" value="Ser/Thr kinase"/>
    <property type="match status" value="1"/>
</dbReference>
<dbReference type="Gene3D" id="1.10.510.10">
    <property type="entry name" value="Transferase(Phosphotransferase) domain 1"/>
    <property type="match status" value="1"/>
</dbReference>
<dbReference type="InterPro" id="IPR050235">
    <property type="entry name" value="CK1_Ser-Thr_kinase"/>
</dbReference>
<dbReference type="InterPro" id="IPR011009">
    <property type="entry name" value="Kinase-like_dom_sf"/>
</dbReference>
<dbReference type="InterPro" id="IPR000719">
    <property type="entry name" value="Prot_kinase_dom"/>
</dbReference>
<dbReference type="InterPro" id="IPR008271">
    <property type="entry name" value="Ser/Thr_kinase_AS"/>
</dbReference>
<dbReference type="PANTHER" id="PTHR11909">
    <property type="entry name" value="CASEIN KINASE-RELATED"/>
    <property type="match status" value="1"/>
</dbReference>
<dbReference type="Pfam" id="PF00069">
    <property type="entry name" value="Pkinase"/>
    <property type="match status" value="1"/>
</dbReference>
<dbReference type="SMART" id="SM00220">
    <property type="entry name" value="S_TKc"/>
    <property type="match status" value="1"/>
</dbReference>
<dbReference type="SUPFAM" id="SSF56112">
    <property type="entry name" value="Protein kinase-like (PK-like)"/>
    <property type="match status" value="1"/>
</dbReference>
<dbReference type="PROSITE" id="PS50011">
    <property type="entry name" value="PROTEIN_KINASE_DOM"/>
    <property type="match status" value="1"/>
</dbReference>
<dbReference type="PROSITE" id="PS00108">
    <property type="entry name" value="PROTEIN_KINASE_ST"/>
    <property type="match status" value="1"/>
</dbReference>
<evidence type="ECO:0000250" key="1">
    <source>
        <dbReference type="UniProtKB" id="P16913"/>
    </source>
</evidence>
<evidence type="ECO:0000255" key="2">
    <source>
        <dbReference type="PROSITE-ProRule" id="PRU00159"/>
    </source>
</evidence>
<evidence type="ECO:0000255" key="3">
    <source>
        <dbReference type="PROSITE-ProRule" id="PRU10027"/>
    </source>
</evidence>
<proteinExistence type="evidence at transcript level"/>
<reference key="1">
    <citation type="journal article" date="1990" name="Virology">
        <title>The complete DNA sequence of vaccinia virus.</title>
        <authorList>
            <person name="Goebel S.J."/>
            <person name="Johnson G.P."/>
            <person name="Perkus M.E."/>
            <person name="Davis S.W."/>
            <person name="Winslow J.P."/>
            <person name="Paoletti E."/>
        </authorList>
    </citation>
    <scope>NUCLEOTIDE SEQUENCE [LARGE SCALE GENOMIC DNA]</scope>
</reference>
<reference key="2">
    <citation type="journal article" date="1990" name="Virology">
        <title>Appendix to 'The complete DNA sequence of vaccinia virus'.</title>
        <authorList>
            <person name="Goebel S.J."/>
            <person name="Johnson G.P."/>
            <person name="Perkus M.E."/>
            <person name="Davis S.W."/>
            <person name="Winslow J.P."/>
            <person name="Paoletti E."/>
        </authorList>
    </citation>
    <scope>NUCLEOTIDE SEQUENCE [LARGE SCALE GENOMIC DNA]</scope>
</reference>
<name>PG187_VACCC</name>
<feature type="chain" id="PRO_0000086791" description="B1 kinase">
    <location>
        <begin position="1"/>
        <end position="300"/>
    </location>
</feature>
<feature type="domain" description="Protein kinase" evidence="2">
    <location>
        <begin position="16"/>
        <end position="282"/>
    </location>
</feature>
<feature type="active site" description="Proton acceptor" evidence="2 3">
    <location>
        <position position="147"/>
    </location>
</feature>
<feature type="binding site" evidence="2">
    <location>
        <begin position="22"/>
        <end position="30"/>
    </location>
    <ligand>
        <name>ATP</name>
        <dbReference type="ChEBI" id="CHEBI:30616"/>
    </ligand>
</feature>
<feature type="binding site" evidence="2">
    <location>
        <position position="45"/>
    </location>
    <ligand>
        <name>ATP</name>
        <dbReference type="ChEBI" id="CHEBI:30616"/>
    </ligand>
</feature>
<sequence>MNFQGLVLTDNCKNQWVVGPLIGKGGFGSIYTTNDNNYVVKIEPKANGSLFTEQAFYTRVLKPSVIEEWKKSHNIKHVGLITCKAFGLYKSINVEYRFLVINRLGVDLDAVIRANNNRLPKRSVMLIGIEILNTIQFMHEQGYSHGDIKASNIVLDQIDKNKLYLVDYGLVSKFMSNGEHVPFIRNPNKMDNGTLEFTPIDSHKGYVVSRRGDLETLGYCMIRWLGGILPWTKISETKNCALVSATKQKYVNNTATLLMTSLQYAPRELLQYITMVNSLTYFEEPNYDEFRHILMQGVYY</sequence>
<organism>
    <name type="scientific">Vaccinia virus (strain Copenhagen)</name>
    <name type="common">VACV</name>
    <dbReference type="NCBI Taxonomy" id="10249"/>
    <lineage>
        <taxon>Viruses</taxon>
        <taxon>Varidnaviria</taxon>
        <taxon>Bamfordvirae</taxon>
        <taxon>Nucleocytoviricota</taxon>
        <taxon>Pokkesviricetes</taxon>
        <taxon>Chitovirales</taxon>
        <taxon>Poxviridae</taxon>
        <taxon>Chordopoxvirinae</taxon>
        <taxon>Orthopoxvirus</taxon>
        <taxon>Vaccinia virus</taxon>
    </lineage>
</organism>